<comment type="function">
    <molecule>Glycoprotein N</molecule>
    <text evidence="3">Glycoprotein N and glycoprotein C interact with each other and are present at the surface of the virion. Glycoprotein N probably locks the Gn-Gc complex in a prefusion state. Glycoprotein N and glycoprotein C are able to attach the virion to host cell receptors. This attachment induces virion internalization predominantly through clathrin-dependent endocytosis.</text>
</comment>
<comment type="function">
    <molecule>Glycoprotein C</molecule>
    <text evidence="1 2 3">Glycoprotein C and glycoprotein N interact with each other and are present at the surface of the virion (By similarity). The spikes at the surface of the virion are formed by an N-terminal extension of glycoprotein C (By similarity). Glycoprotein N and glycoprotein C are able to attach the virion to host cell receptors (By similarity). This attachment induces virion internalization predominantly through clathrin-dependent endocytosis (By similarity). Class II fusion protein that promotes fusion of viral membrane with host endosomal membrane after endocytosis of the virion (By similarity). Exposure to potassium is necessary for the conformational change leading to fusion (By similarity).</text>
</comment>
<comment type="subunit">
    <molecule>Glycoprotein N</molecule>
    <text evidence="3">Heterodimer with glycoprotein C; in prefusion state.</text>
</comment>
<comment type="subunit">
    <molecule>Glycoprotein C</molecule>
    <text evidence="3">Heterodimer with glycoprotein N; in prefusion state (By similarity). Homotrimeric; in postfusion state (By similarity).</text>
</comment>
<comment type="subcellular location">
    <molecule>Envelopment polyprotein</molecule>
    <subcellularLocation>
        <location evidence="3">Host endoplasmic reticulum membrane</location>
    </subcellularLocation>
</comment>
<comment type="subcellular location">
    <molecule>Glycoprotein C</molecule>
    <subcellularLocation>
        <location evidence="3">Virion membrane</location>
        <topology evidence="3">Single-pass type I membrane protein</topology>
    </subcellularLocation>
    <subcellularLocation>
        <location evidence="3">Host Golgi apparatus membrane</location>
        <topology evidence="3">Single-pass type I membrane protein</topology>
    </subcellularLocation>
    <subcellularLocation>
        <location evidence="3">Host endoplasmic reticulum membrane</location>
        <topology evidence="3">Single-pass type I membrane protein</topology>
    </subcellularLocation>
    <text evidence="3">Interaction between glycoprotein C and glycoprotein N is essential for proper targeting of glycoprotein C to the Golgi complex, where virion budding occurs.</text>
</comment>
<comment type="subcellular location">
    <molecule>Glycoprotein N</molecule>
    <subcellularLocation>
        <location evidence="3">Virion membrane</location>
        <topology evidence="3">Multi-pass membrane protein</topology>
    </subcellularLocation>
    <subcellularLocation>
        <location evidence="3">Host Golgi apparatus membrane</location>
        <topology evidence="3">Multi-pass membrane protein</topology>
    </subcellularLocation>
</comment>
<comment type="subcellular location">
    <molecule>Non-Structural protein M</molecule>
    <subcellularLocation>
        <location evidence="3">Host Golgi apparatus membrane</location>
        <topology evidence="4">Multi-pass membrane protein</topology>
    </subcellularLocation>
</comment>
<comment type="PTM">
    <molecule>Envelopment polyprotein</molecule>
    <text evidence="3">Specific enzymatic cleavage by host MBTPS1/S1P/SKI-1 endopeptidase yield glycoprotein N. Specific enzymatic cleavages by host furin-like protease and MBTPS1/S1P endopeptidase yield GP38.</text>
</comment>
<comment type="PTM">
    <molecule>Glycoprotein N</molecule>
    <text evidence="3">Glycosylated.</text>
</comment>
<comment type="PTM">
    <molecule>Glycoprotein C</molecule>
    <text evidence="3">Glycosylated.</text>
</comment>
<comment type="similarity">
    <text evidence="6">Belongs to the nairovirus envelope glycoprotein family.</text>
</comment>
<proteinExistence type="evidence at protein level"/>
<reference key="1">
    <citation type="journal article" date="1992" name="Virology">
        <title>Dugbe Nairovirus M RNA: nucleotide sequence and coding strategy.</title>
        <authorList>
            <person name="Marriott A.C."/>
            <person name="El-Ghorr A.A."/>
            <person name="Nuttall P.A."/>
        </authorList>
    </citation>
    <scope>NUCLEOTIDE SEQUENCE [GENOMIC RNA]</scope>
    <scope>PROTEIN SEQUENCE OF 897-905</scope>
</reference>
<dbReference type="EMBL" id="M94133">
    <property type="protein sequence ID" value="AAA42974.1"/>
    <property type="molecule type" value="Genomic_RNA"/>
</dbReference>
<dbReference type="PIR" id="A43364">
    <property type="entry name" value="A43364"/>
</dbReference>
<dbReference type="SMR" id="Q02004"/>
<dbReference type="GlyCosmos" id="Q02004">
    <property type="glycosylation" value="9 sites, No reported glycans"/>
</dbReference>
<dbReference type="KEGG" id="vg:956565"/>
<dbReference type="Proteomes" id="UP000000278">
    <property type="component" value="Genome"/>
</dbReference>
<dbReference type="GO" id="GO:0044167">
    <property type="term" value="C:host cell endoplasmic reticulum membrane"/>
    <property type="evidence" value="ECO:0007669"/>
    <property type="project" value="UniProtKB-SubCell"/>
</dbReference>
<dbReference type="GO" id="GO:0044178">
    <property type="term" value="C:host cell Golgi membrane"/>
    <property type="evidence" value="ECO:0007669"/>
    <property type="project" value="UniProtKB-SubCell"/>
</dbReference>
<dbReference type="GO" id="GO:0016020">
    <property type="term" value="C:membrane"/>
    <property type="evidence" value="ECO:0007669"/>
    <property type="project" value="UniProtKB-KW"/>
</dbReference>
<dbReference type="GO" id="GO:0019031">
    <property type="term" value="C:viral envelope"/>
    <property type="evidence" value="ECO:0007669"/>
    <property type="project" value="UniProtKB-KW"/>
</dbReference>
<dbReference type="GO" id="GO:0055036">
    <property type="term" value="C:virion membrane"/>
    <property type="evidence" value="ECO:0007669"/>
    <property type="project" value="UniProtKB-SubCell"/>
</dbReference>
<dbReference type="GO" id="GO:0075512">
    <property type="term" value="P:clathrin-dependent endocytosis of virus by host cell"/>
    <property type="evidence" value="ECO:0007669"/>
    <property type="project" value="UniProtKB-KW"/>
</dbReference>
<dbReference type="GO" id="GO:0039654">
    <property type="term" value="P:fusion of virus membrane with host endosome membrane"/>
    <property type="evidence" value="ECO:0007669"/>
    <property type="project" value="UniProtKB-KW"/>
</dbReference>
<dbReference type="GO" id="GO:0019062">
    <property type="term" value="P:virion attachment to host cell"/>
    <property type="evidence" value="ECO:0007669"/>
    <property type="project" value="UniProtKB-KW"/>
</dbReference>
<dbReference type="Gene3D" id="1.10.8.1320">
    <property type="match status" value="2"/>
</dbReference>
<dbReference type="InterPro" id="IPR048791">
    <property type="entry name" value="Gc_C_bunya"/>
</dbReference>
<dbReference type="InterPro" id="IPR048801">
    <property type="entry name" value="Gn_nairovirus"/>
</dbReference>
<dbReference type="InterPro" id="IPR048529">
    <property type="entry name" value="GP38_nairovirus"/>
</dbReference>
<dbReference type="InterPro" id="IPR002532">
    <property type="entry name" value="Hanta_Gc_N"/>
</dbReference>
<dbReference type="InterPro" id="IPR048796">
    <property type="entry name" value="NSm_dom_nairovirus"/>
</dbReference>
<dbReference type="Pfam" id="PF20682">
    <property type="entry name" value="Hanta_Gc_C"/>
    <property type="match status" value="1"/>
</dbReference>
<dbReference type="Pfam" id="PF01561">
    <property type="entry name" value="Hanta_Gc_N"/>
    <property type="match status" value="1"/>
</dbReference>
<dbReference type="Pfam" id="PF20726">
    <property type="entry name" value="Nairovirus_Gn"/>
    <property type="match status" value="1"/>
</dbReference>
<dbReference type="Pfam" id="PF07948">
    <property type="entry name" value="Nairovirus_GP38"/>
    <property type="match status" value="1"/>
</dbReference>
<dbReference type="Pfam" id="PF20728">
    <property type="entry name" value="Nairovirus_NSm"/>
    <property type="match status" value="1"/>
</dbReference>
<evidence type="ECO:0000250" key="1">
    <source>
        <dbReference type="UniProtKB" id="A6XIP3"/>
    </source>
</evidence>
<evidence type="ECO:0000250" key="2">
    <source>
        <dbReference type="UniProtKB" id="H2AM12"/>
    </source>
</evidence>
<evidence type="ECO:0000250" key="3">
    <source>
        <dbReference type="UniProtKB" id="Q8JSZ3"/>
    </source>
</evidence>
<evidence type="ECO:0000255" key="4"/>
<evidence type="ECO:0000256" key="5">
    <source>
        <dbReference type="SAM" id="MobiDB-lite"/>
    </source>
</evidence>
<evidence type="ECO:0000305" key="6"/>
<sequence length="1551" mass="173355">MSKRVLIIAVVVYLVFTTQNQITGNHTTINSSSPSTTEASSTPTVSRTPQTTTTSTAVSTTITATTTPTASWTTQSQYFNKTTQHHWREETMISRNPTVLDRQSRASSVRELLNTKFLMLLGFIPKGEVNHLENACNREGKNCTELILKERIARFFSETEKESCYNTYLEKHLRSVSPEVSLTPYRVLGLREDILLKEIDRRIIRFETDSQRVTCLSASLLKPDVFIREQRIDAKPSNGPKIVPVDSVACMNLEANVDVRSNKLVIQSLMTTVKISLKNCKVVVNSRQCIHQQTGSGVIKVPKFEKQQGGTWSSYIAGVYTATIDLLDENNQNCKLFTECIVKGRELVKGQSELKSFNIEVLLPRVMKTRRKLLAVTDGSTECNSGTQLIEGKSIEVHKQDIGGPGKKLTICNGTSVLDVPLDEGHGCYTINVITSKRACRPKNSKLQCSIDKELKPCDSGKCLSISQKGAGHIKVSRGKTILITECKEHCQIPVPTGKGDIMVDCSGGRQHYLEVNIVDIHCPNTKFLGGIMLYFCRMSSRPTVALLLGIWIGCGYILTCIFSFLLYHLILFFANCIKQCRKKGERLGEICVKCEQQTVNLMDQELHDLNCNFNLCPYCCNRMSDEGMSRHVGKCPKRLERLNEIELYLTTSECLCLSVCYQLLISVGIFLKRTTWLVVLLVLLGLAISPVQGAPTEVSNVKQDGDYSICYFIFGCLVTAALLLKVKRTNSNGIVVVVDSFGRCPYCNEFTDSLFEEVLHDTLCSLCVCPFCEKQALDLVTLEEHVKECYKVATRKDIFKILGRKFTNALVRREKLFTTGLQLFINKTNVVVFALIMCFLLLLTGHNASAFDSGDLPDGVWEESSQLVKSCTQFCYIEEDVCYCPAEDGVGRKLLFFNGLQNSVKRLSDSHKLLTSVSIDAPWGRINVESTWKPTLAASNIAMSWSSTDIKGEKVILSGRSTSIIKLKEKTGVMWKLVGSGLASEKKKPFRFPIMDFAQVYNSVFQYITGDRLLSEWPKAVCTGDCPHRCGCQTSTCMAKECHTQECVSTHMVLGIGTGCTCCGMDVERPFNKYLGVKWSTEYLRTEVLVCVEVTEEERHCEIVEAGTRFNIGPITITISDPQNIGSKLPESLMTVQEIDDSNFVDIMHVGNVISADNSCRLQSCTHGSAVTTRFTALTALIKDDHSSGLNLAVLDPKVNSSWLSWEGCDMDYYCNVGDWPTCTYTGVVTQKLREFLKLDQHRKRLHTTLSFSLKKNLSKRSHTSVRLEGKTVTRMEVKVTALIEVDGMELHSKTIRLSGIRLTGLKCSGCFSCTSGISCSVNAKLTSPDEFTLHLRSTSPNVVVAETSIIARKGPSATTSRFKVFSVRDTKKICFEVVEREYCKDCTPDELTTCTGVELEPTKDILLEHRGTIVQHQNDTCKSKIDCWSNSISSFASGIGDFFKHYIGSIAVGVLGTVLPFALLILFFIYGDKMLWPFKVFCRPCRRCCRKNEGYNKLAEEEELRDIIRKFSKSGELINKDAKDKRTLARLFMSDNPKLKKEKKLSEIA</sequence>
<gene>
    <name type="primary">GP</name>
</gene>
<accession>Q02004</accession>
<organismHost>
    <name type="scientific">Amblyomma variegatum</name>
    <name type="common">Tropical bont tick</name>
    <dbReference type="NCBI Taxonomy" id="34610"/>
</organismHost>
<organismHost>
    <name type="scientific">Homo sapiens</name>
    <name type="common">Human</name>
    <dbReference type="NCBI Taxonomy" id="9606"/>
</organismHost>
<organismHost>
    <name type="scientific">Hyalomma rufipes</name>
    <name type="common">Tick</name>
    <name type="synonym">Hyalomma marginatum rufipes</name>
    <dbReference type="NCBI Taxonomy" id="72862"/>
</organismHost>
<organismHost>
    <name type="scientific">Hyalomma truncatum</name>
    <dbReference type="NCBI Taxonomy" id="72855"/>
</organismHost>
<organismHost>
    <name type="scientific">Rhipicephalus</name>
    <dbReference type="NCBI Taxonomy" id="34630"/>
</organismHost>
<organismHost>
    <name type="scientific">Rhipicephalus annulatus</name>
    <dbReference type="NCBI Taxonomy" id="34611"/>
</organismHost>
<organismHost>
    <name type="scientific">Rhipicephalus decoloratus</name>
    <name type="common">African blue tick</name>
    <name type="synonym">Boophilus decoloratus</name>
    <dbReference type="NCBI Taxonomy" id="60189"/>
</organismHost>
<organismHost>
    <name type="scientific">Rhipicephalus geigyi</name>
    <dbReference type="NCBI Taxonomy" id="136141"/>
</organismHost>
<feature type="signal peptide" evidence="4">
    <location>
        <begin position="1"/>
        <end position="17"/>
    </location>
</feature>
<feature type="chain" id="PRO_0000036802" description="Envelopment polyprotein">
    <location>
        <begin position="18"/>
        <end position="1551"/>
    </location>
</feature>
<feature type="chain" id="PRO_0000369248" description="Mucin-like variable region">
    <location>
        <begin position="18"/>
        <end position="105"/>
    </location>
</feature>
<feature type="chain" id="PRO_0000434912" description="GP38" evidence="3">
    <location>
        <begin position="106"/>
        <end position="374"/>
    </location>
</feature>
<feature type="chain" id="PRO_0000036804" description="Glycoprotein N" evidence="4">
    <location>
        <begin position="375"/>
        <end position="662"/>
    </location>
</feature>
<feature type="chain" id="PRO_0000434913" description="Non-Structural protein M" evidence="3">
    <location>
        <begin position="694"/>
        <end position="896"/>
    </location>
</feature>
<feature type="chain" id="PRO_0000036805" description="Glycoprotein C" evidence="4">
    <location>
        <begin position="897"/>
        <end position="1551"/>
    </location>
</feature>
<feature type="topological domain" description="Lumenal" evidence="6">
    <location>
        <begin position="18"/>
        <end position="546"/>
    </location>
</feature>
<feature type="transmembrane region" description="Helical" evidence="4">
    <location>
        <begin position="547"/>
        <end position="567"/>
    </location>
</feature>
<feature type="topological domain" description="Cytoplasmic" evidence="3">
    <location>
        <begin position="568"/>
        <end position="675"/>
    </location>
</feature>
<feature type="transmembrane region" description="Helical" evidence="4">
    <location>
        <begin position="676"/>
        <end position="696"/>
    </location>
</feature>
<feature type="topological domain" description="Lumenal" evidence="3">
    <location>
        <begin position="697"/>
        <end position="704"/>
    </location>
</feature>
<feature type="transmembrane region" description="Helical" evidence="4">
    <location>
        <begin position="705"/>
        <end position="725"/>
    </location>
</feature>
<feature type="topological domain" description="Cytoplasmic" evidence="3">
    <location>
        <begin position="726"/>
        <end position="823"/>
    </location>
</feature>
<feature type="transmembrane region" description="Helical" evidence="4">
    <location>
        <begin position="824"/>
        <end position="844"/>
    </location>
</feature>
<feature type="topological domain" description="Lumenal" evidence="6">
    <location>
        <begin position="845"/>
        <end position="1451"/>
    </location>
</feature>
<feature type="transmembrane region" description="Helical" evidence="4">
    <location>
        <begin position="1452"/>
        <end position="1472"/>
    </location>
</feature>
<feature type="topological domain" description="Cytoplasmic" evidence="6">
    <location>
        <begin position="1473"/>
        <end position="1551"/>
    </location>
</feature>
<feature type="region of interest" description="Disordered" evidence="5">
    <location>
        <begin position="24"/>
        <end position="66"/>
    </location>
</feature>
<feature type="compositionally biased region" description="Low complexity" evidence="5">
    <location>
        <begin position="31"/>
        <end position="66"/>
    </location>
</feature>
<feature type="site" description="Cleavage; by host furin-like protease" evidence="3">
    <location>
        <begin position="105"/>
        <end position="106"/>
    </location>
</feature>
<feature type="site" description="Cleavage; by host MBTPS1/SKI-1 protease" evidence="3">
    <location>
        <begin position="374"/>
        <end position="375"/>
    </location>
</feature>
<feature type="site" description="Cleavage" evidence="3">
    <location>
        <begin position="662"/>
        <end position="663"/>
    </location>
</feature>
<feature type="site" description="Cleavage; by host protease" evidence="3">
    <location>
        <begin position="694"/>
        <end position="695"/>
    </location>
</feature>
<feature type="site" description="Cleavage; by host signal peptidase" evidence="3">
    <location>
        <begin position="849"/>
        <end position="850"/>
    </location>
</feature>
<feature type="site" description="Cleavage; by host protease" evidence="3">
    <location>
        <begin position="896"/>
        <end position="897"/>
    </location>
</feature>
<feature type="site" description="Involved in fusion with the host membrane" evidence="3">
    <location>
        <position position="924"/>
    </location>
</feature>
<feature type="site" description="Involved in fusion with the host membrane" evidence="3">
    <location>
        <position position="1221"/>
    </location>
</feature>
<feature type="site" description="Involved in fusion with the host membrane" evidence="3">
    <location>
        <position position="1336"/>
    </location>
</feature>
<feature type="glycosylation site" description="N-linked (GlcNAc...) asparagine; by host" evidence="4">
    <location>
        <position position="25"/>
    </location>
</feature>
<feature type="glycosylation site" description="N-linked (GlcNAc...) asparagine; by host" evidence="4">
    <location>
        <position position="30"/>
    </location>
</feature>
<feature type="glycosylation site" description="N-linked (GlcNAc...) asparagine; by host" evidence="4">
    <location>
        <position position="80"/>
    </location>
</feature>
<feature type="glycosylation site" description="N-linked (GlcNAc...) asparagine; by host" evidence="4">
    <location>
        <position position="142"/>
    </location>
</feature>
<feature type="glycosylation site" description="N-linked (GlcNAc...) asparagine; by host" evidence="3">
    <location>
        <position position="413"/>
    </location>
</feature>
<feature type="glycosylation site" description="N-linked (GlcNAc...) asparagine; by host" evidence="4">
    <location>
        <position position="848"/>
    </location>
</feature>
<feature type="glycosylation site" description="N-linked (GlcNAc...) asparagine; by host" evidence="4">
    <location>
        <position position="1201"/>
    </location>
</feature>
<feature type="glycosylation site" description="N-linked (GlcNAc...) asparagine; by host" evidence="4">
    <location>
        <position position="1258"/>
    </location>
</feature>
<feature type="glycosylation site" description="N-linked (GlcNAc...) asparagine; by host" evidence="3">
    <location>
        <position position="1420"/>
    </location>
</feature>
<feature type="disulfide bond" evidence="3">
    <location>
        <begin position="1023"/>
        <end position="1216"/>
    </location>
</feature>
<name>GP_DUGBA</name>
<protein>
    <recommendedName>
        <fullName>Envelopment polyprotein</fullName>
    </recommendedName>
    <alternativeName>
        <fullName>M polyprotein</fullName>
    </alternativeName>
    <component>
        <recommendedName>
            <fullName>Mucin-like variable region</fullName>
        </recommendedName>
    </component>
    <component>
        <recommendedName>
            <fullName evidence="3">GP38</fullName>
        </recommendedName>
    </component>
    <component>
        <recommendedName>
            <fullName evidence="3">Glycoprotein N</fullName>
            <shortName>Gn</shortName>
        </recommendedName>
        <alternativeName>
            <fullName>Glycoprotein G2</fullName>
        </alternativeName>
    </component>
    <component>
        <recommendedName>
            <fullName evidence="3">Non-Structural protein M</fullName>
            <shortName>NSm</shortName>
        </recommendedName>
    </component>
    <component>
        <recommendedName>
            <fullName evidence="3">Glycoprotein C</fullName>
            <shortName>Gc</shortName>
        </recommendedName>
        <alternativeName>
            <fullName>Glycoprotein G1</fullName>
        </alternativeName>
    </component>
</protein>
<organism>
    <name type="scientific">Dugbe virus (isolate ArD44313)</name>
    <name type="common">DUGV</name>
    <dbReference type="NCBI Taxonomy" id="766194"/>
    <lineage>
        <taxon>Viruses</taxon>
        <taxon>Riboviria</taxon>
        <taxon>Orthornavirae</taxon>
        <taxon>Negarnaviricota</taxon>
        <taxon>Polyploviricotina</taxon>
        <taxon>Ellioviricetes</taxon>
        <taxon>Bunyavirales</taxon>
        <taxon>Nairoviridae</taxon>
        <taxon>Orthonairovirus</taxon>
        <taxon>Dugbe virus</taxon>
    </lineage>
</organism>
<keyword id="KW-1165">Clathrin-mediated endocytosis of virus by host</keyword>
<keyword id="KW-0165">Cleavage on pair of basic residues</keyword>
<keyword id="KW-0903">Direct protein sequencing</keyword>
<keyword id="KW-1015">Disulfide bond</keyword>
<keyword id="KW-1170">Fusion of virus membrane with host endosomal membrane</keyword>
<keyword id="KW-1168">Fusion of virus membrane with host membrane</keyword>
<keyword id="KW-0325">Glycoprotein</keyword>
<keyword id="KW-1038">Host endoplasmic reticulum</keyword>
<keyword id="KW-1040">Host Golgi apparatus</keyword>
<keyword id="KW-1043">Host membrane</keyword>
<keyword id="KW-0945">Host-virus interaction</keyword>
<keyword id="KW-0472">Membrane</keyword>
<keyword id="KW-1185">Reference proteome</keyword>
<keyword id="KW-0732">Signal</keyword>
<keyword id="KW-0812">Transmembrane</keyword>
<keyword id="KW-1133">Transmembrane helix</keyword>
<keyword id="KW-1161">Viral attachment to host cell</keyword>
<keyword id="KW-0261">Viral envelope protein</keyword>
<keyword id="KW-1162">Viral penetration into host cytoplasm</keyword>
<keyword id="KW-0946">Virion</keyword>
<keyword id="KW-1164">Virus endocytosis by host</keyword>
<keyword id="KW-1160">Virus entry into host cell</keyword>